<proteinExistence type="inferred from homology"/>
<comment type="function">
    <text evidence="1">Catalyzes the reversible oxidation of malate to oxaloacetate.</text>
</comment>
<comment type="catalytic activity">
    <reaction evidence="2">
        <text>(S)-malate + NAD(+) = oxaloacetate + NADH + H(+)</text>
        <dbReference type="Rhea" id="RHEA:21432"/>
        <dbReference type="ChEBI" id="CHEBI:15378"/>
        <dbReference type="ChEBI" id="CHEBI:15589"/>
        <dbReference type="ChEBI" id="CHEBI:16452"/>
        <dbReference type="ChEBI" id="CHEBI:57540"/>
        <dbReference type="ChEBI" id="CHEBI:57945"/>
        <dbReference type="EC" id="1.1.1.37"/>
    </reaction>
</comment>
<comment type="subunit">
    <text evidence="1">Homodimer.</text>
</comment>
<comment type="similarity">
    <text evidence="3">Belongs to the LDH/MDH superfamily. MDH type 1 family.</text>
</comment>
<reference key="1">
    <citation type="journal article" date="2004" name="Appl. Environ. Microbiol.">
        <title>Genomic diversity of Erwinia carotovora subsp. carotovora and its correlation with virulence.</title>
        <authorList>
            <person name="Yap M.-N."/>
            <person name="Barak J.D."/>
            <person name="Charkowski A.O."/>
        </authorList>
    </citation>
    <scope>NUCLEOTIDE SEQUENCE [GENOMIC DNA]</scope>
    <source>
        <strain>WPP1</strain>
        <strain>WPP10</strain>
        <strain>WPP11</strain>
        <strain>WPP12</strain>
        <strain>WPP13</strain>
        <strain>WPP14</strain>
        <strain>WPP15</strain>
        <strain>WPP17</strain>
        <strain>WPP18</strain>
        <strain>WPP19</strain>
        <strain>WPP2</strain>
        <strain>WPP20</strain>
        <strain>WPP21</strain>
        <strain>WPP22</strain>
        <strain>WPP24</strain>
        <strain>WPP25</strain>
        <strain>WPP3</strain>
        <strain>WPP4</strain>
        <strain>WPP5</strain>
        <strain>WPP6</strain>
        <strain>WPP7</strain>
        <strain>WPP8</strain>
        <strain>WPP9</strain>
    </source>
</reference>
<feature type="chain" id="PRO_0000113318" description="Malate dehydrogenase">
    <location>
        <begin position="1" status="less than"/>
        <end position="154" status="greater than"/>
    </location>
</feature>
<feature type="active site" description="Proton acceptor" evidence="1">
    <location>
        <position position="99"/>
    </location>
</feature>
<feature type="binding site" evidence="2">
    <location>
        <position position="3"/>
    </location>
    <ligand>
        <name>substrate</name>
    </ligand>
</feature>
<feature type="binding site" evidence="2">
    <location>
        <position position="9"/>
    </location>
    <ligand>
        <name>substrate</name>
    </ligand>
</feature>
<feature type="binding site" evidence="1">
    <location>
        <position position="16"/>
    </location>
    <ligand>
        <name>NAD(+)</name>
        <dbReference type="ChEBI" id="CHEBI:57540"/>
    </ligand>
</feature>
<feature type="binding site" evidence="1">
    <location>
        <begin position="39"/>
        <end position="41"/>
    </location>
    <ligand>
        <name>NAD(+)</name>
        <dbReference type="ChEBI" id="CHEBI:57540"/>
    </ligand>
</feature>
<feature type="binding site" evidence="2">
    <location>
        <position position="41"/>
    </location>
    <ligand>
        <name>substrate</name>
    </ligand>
</feature>
<feature type="binding site" evidence="2">
    <location>
        <position position="75"/>
    </location>
    <ligand>
        <name>substrate</name>
    </ligand>
</feature>
<feature type="binding site" evidence="1">
    <location>
        <position position="149"/>
    </location>
    <ligand>
        <name>NAD(+)</name>
        <dbReference type="ChEBI" id="CHEBI:57540"/>
    </ligand>
</feature>
<feature type="sequence variant" description="In strain: WPP3.">
    <original>VNA</original>
    <variation>LPF</variation>
    <location>
        <begin position="15"/>
        <end position="17"/>
    </location>
</feature>
<feature type="sequence variant" description="In strain: WPP3.">
    <original>LV</original>
    <variation>WH</variation>
    <location>
        <begin position="23"/>
        <end position="24"/>
    </location>
</feature>
<feature type="sequence variant" description="In strain: WPP3.">
    <original>P</original>
    <variation>R</variation>
    <location>
        <position position="32"/>
    </location>
</feature>
<feature type="sequence variant" description="In strain: WPP7.">
    <original>I</original>
    <variation>M</variation>
    <location>
        <position position="49"/>
    </location>
</feature>
<feature type="sequence variant" description="In strain: WPP25.">
    <original>PL</original>
    <variation>LC</variation>
    <location>
        <begin position="106"/>
        <end position="107"/>
    </location>
</feature>
<feature type="sequence variant" description="In strain: WPP25.">
    <original>V</original>
    <variation>D</variation>
    <location>
        <position position="111"/>
    </location>
</feature>
<feature type="sequence variant" description="In strain: WPP3 and WPP8.">
    <original>S</original>
    <variation>N</variation>
    <location>
        <position position="117"/>
    </location>
</feature>
<feature type="sequence variant" description="In strain: WPP3.">
    <original>TE</original>
    <variation>AQ</variation>
    <location>
        <begin position="133"/>
        <end position="134"/>
    </location>
</feature>
<feature type="sequence variant" description="In strain: WPP19.">
    <original>EAKA</original>
    <variation>KPKQ</variation>
    <location>
        <begin position="137"/>
        <end position="140"/>
    </location>
</feature>
<feature type="sequence variant" description="In strain: WPP3.">
    <original>E</original>
    <variation>K</variation>
    <location>
        <position position="137"/>
    </location>
</feature>
<feature type="sequence variant" description="In strain: WPP25.">
    <original>G</original>
    <variation>R</variation>
    <location>
        <position position="141"/>
    </location>
</feature>
<feature type="sequence variant" description="In strain: WPP9 and WPP10.">
    <original>G</original>
    <variation>A</variation>
    <location>
        <position position="142"/>
    </location>
</feature>
<feature type="sequence variant" description="In strain: WPP25.">
    <original>GQVPG</original>
    <variation>ARLPA</variation>
    <location>
        <begin position="150"/>
        <end position="154"/>
    </location>
</feature>
<feature type="sequence variant" description="In strain: WPP20, WPP22 and WPP7.">
    <original>VPG</original>
    <variation>AAR</variation>
    <location>
        <begin position="152"/>
        <end position="154"/>
    </location>
</feature>
<feature type="sequence variant" description="In strain: WPP5.">
    <original>VPG</original>
    <variation>AGR</variation>
    <location>
        <begin position="152"/>
        <end position="154"/>
    </location>
</feature>
<feature type="sequence variant" description="In strain: WPP12 and WPP21.">
    <original>VP</original>
    <variation>AA</variation>
    <location>
        <begin position="152"/>
        <end position="153"/>
    </location>
</feature>
<feature type="sequence variant" description="In strain: WPP24.">
    <original>V</original>
    <variation>A</variation>
    <location>
        <position position="152"/>
    </location>
</feature>
<feature type="sequence variant" description="In strain: WPP4.">
    <original>P</original>
    <variation>A</variation>
    <location>
        <position position="153"/>
    </location>
</feature>
<feature type="non-terminal residue">
    <location>
        <position position="1"/>
    </location>
</feature>
<feature type="non-terminal residue">
    <location>
        <position position="154"/>
    </location>
</feature>
<evidence type="ECO:0000250" key="1"/>
<evidence type="ECO:0000255" key="2">
    <source>
        <dbReference type="PROSITE-ProRule" id="PRU10004"/>
    </source>
</evidence>
<evidence type="ECO:0000305" key="3"/>
<gene>
    <name type="primary">mdh</name>
</gene>
<sequence>LRRKPGMDRSDLFNVNAGIVRNLVEQIAVTCPKACIGIITNPVNTTVAIAAEVLKKAGVYDKNKLFGVTTLDIIRSNTFVAELKGKQPQDINVPVIGGHSGVTILPLLSQVPGISFSEQEVADLTKRIQNAGTEVVEAKAGGGSATLSMGQVPG</sequence>
<keyword id="KW-0520">NAD</keyword>
<keyword id="KW-0560">Oxidoreductase</keyword>
<keyword id="KW-0816">Tricarboxylic acid cycle</keyword>
<accession>P61897</accession>
<protein>
    <recommendedName>
        <fullName>Malate dehydrogenase</fullName>
        <ecNumber>1.1.1.37</ecNumber>
    </recommendedName>
</protein>
<name>MDH_PECCC</name>
<dbReference type="EC" id="1.1.1.37"/>
<dbReference type="EMBL" id="AY428968">
    <property type="protein sequence ID" value="AAR11889.1"/>
    <property type="molecule type" value="Genomic_DNA"/>
</dbReference>
<dbReference type="EMBL" id="AY428969">
    <property type="protein sequence ID" value="AAR11890.1"/>
    <property type="molecule type" value="Genomic_DNA"/>
</dbReference>
<dbReference type="EMBL" id="AY428970">
    <property type="protein sequence ID" value="AAR11891.1"/>
    <property type="molecule type" value="Genomic_DNA"/>
</dbReference>
<dbReference type="EMBL" id="AY428971">
    <property type="protein sequence ID" value="AAR11892.1"/>
    <property type="molecule type" value="Genomic_DNA"/>
</dbReference>
<dbReference type="EMBL" id="AY428972">
    <property type="protein sequence ID" value="AAR11893.1"/>
    <property type="molecule type" value="Genomic_DNA"/>
</dbReference>
<dbReference type="EMBL" id="AY428973">
    <property type="protein sequence ID" value="AAR11894.1"/>
    <property type="molecule type" value="Genomic_DNA"/>
</dbReference>
<dbReference type="EMBL" id="AY428974">
    <property type="protein sequence ID" value="AAR11895.1"/>
    <property type="molecule type" value="Genomic_DNA"/>
</dbReference>
<dbReference type="EMBL" id="AY428975">
    <property type="protein sequence ID" value="AAR11896.1"/>
    <property type="molecule type" value="Genomic_DNA"/>
</dbReference>
<dbReference type="EMBL" id="AY428976">
    <property type="protein sequence ID" value="AAR11897.1"/>
    <property type="molecule type" value="Genomic_DNA"/>
</dbReference>
<dbReference type="EMBL" id="AY428977">
    <property type="protein sequence ID" value="AAR11898.1"/>
    <property type="molecule type" value="Genomic_DNA"/>
</dbReference>
<dbReference type="EMBL" id="AY428978">
    <property type="protein sequence ID" value="AAR11899.1"/>
    <property type="molecule type" value="Genomic_DNA"/>
</dbReference>
<dbReference type="EMBL" id="AY428979">
    <property type="protein sequence ID" value="AAR11900.1"/>
    <property type="molecule type" value="Genomic_DNA"/>
</dbReference>
<dbReference type="EMBL" id="AY428980">
    <property type="protein sequence ID" value="AAR11901.1"/>
    <property type="molecule type" value="Genomic_DNA"/>
</dbReference>
<dbReference type="EMBL" id="AY428981">
    <property type="protein sequence ID" value="AAR11902.1"/>
    <property type="molecule type" value="Genomic_DNA"/>
</dbReference>
<dbReference type="EMBL" id="AY428982">
    <property type="protein sequence ID" value="AAR11903.1"/>
    <property type="molecule type" value="Genomic_DNA"/>
</dbReference>
<dbReference type="EMBL" id="AY428983">
    <property type="protein sequence ID" value="AAR11904.1"/>
    <property type="molecule type" value="Genomic_DNA"/>
</dbReference>
<dbReference type="EMBL" id="AY428984">
    <property type="protein sequence ID" value="AAR11905.1"/>
    <property type="molecule type" value="Genomic_DNA"/>
</dbReference>
<dbReference type="EMBL" id="AY428985">
    <property type="protein sequence ID" value="AAR11906.1"/>
    <property type="molecule type" value="Genomic_DNA"/>
</dbReference>
<dbReference type="EMBL" id="AY428986">
    <property type="protein sequence ID" value="AAR11907.1"/>
    <property type="molecule type" value="Genomic_DNA"/>
</dbReference>
<dbReference type="EMBL" id="AY428987">
    <property type="protein sequence ID" value="AAR11908.1"/>
    <property type="molecule type" value="Genomic_DNA"/>
</dbReference>
<dbReference type="EMBL" id="AY428988">
    <property type="protein sequence ID" value="AAR11909.1"/>
    <property type="molecule type" value="Genomic_DNA"/>
</dbReference>
<dbReference type="EMBL" id="AY428989">
    <property type="protein sequence ID" value="AAR11910.1"/>
    <property type="molecule type" value="Genomic_DNA"/>
</dbReference>
<dbReference type="EMBL" id="AY428990">
    <property type="protein sequence ID" value="AAR11911.1"/>
    <property type="molecule type" value="Genomic_DNA"/>
</dbReference>
<dbReference type="SMR" id="P61897"/>
<dbReference type="GO" id="GO:0005737">
    <property type="term" value="C:cytoplasm"/>
    <property type="evidence" value="ECO:0007669"/>
    <property type="project" value="TreeGrafter"/>
</dbReference>
<dbReference type="GO" id="GO:0030060">
    <property type="term" value="F:L-malate dehydrogenase (NAD+) activity"/>
    <property type="evidence" value="ECO:0007669"/>
    <property type="project" value="UniProtKB-EC"/>
</dbReference>
<dbReference type="GO" id="GO:0006108">
    <property type="term" value="P:malate metabolic process"/>
    <property type="evidence" value="ECO:0007669"/>
    <property type="project" value="InterPro"/>
</dbReference>
<dbReference type="GO" id="GO:0006099">
    <property type="term" value="P:tricarboxylic acid cycle"/>
    <property type="evidence" value="ECO:0007669"/>
    <property type="project" value="UniProtKB-KW"/>
</dbReference>
<dbReference type="Gene3D" id="3.90.110.10">
    <property type="entry name" value="Lactate dehydrogenase/glycoside hydrolase, family 4, C-terminal"/>
    <property type="match status" value="1"/>
</dbReference>
<dbReference type="Gene3D" id="3.40.50.720">
    <property type="entry name" value="NAD(P)-binding Rossmann-like Domain"/>
    <property type="match status" value="1"/>
</dbReference>
<dbReference type="InterPro" id="IPR022383">
    <property type="entry name" value="Lactate/malate_DH_C"/>
</dbReference>
<dbReference type="InterPro" id="IPR001236">
    <property type="entry name" value="Lactate/malate_DH_N"/>
</dbReference>
<dbReference type="InterPro" id="IPR015955">
    <property type="entry name" value="Lactate_DH/Glyco_Ohase_4_C"/>
</dbReference>
<dbReference type="InterPro" id="IPR001252">
    <property type="entry name" value="Malate_DH_AS"/>
</dbReference>
<dbReference type="InterPro" id="IPR036291">
    <property type="entry name" value="NAD(P)-bd_dom_sf"/>
</dbReference>
<dbReference type="PANTHER" id="PTHR11540">
    <property type="entry name" value="MALATE AND LACTATE DEHYDROGENASE"/>
    <property type="match status" value="1"/>
</dbReference>
<dbReference type="PANTHER" id="PTHR11540:SF16">
    <property type="entry name" value="MALATE DEHYDROGENASE, MITOCHONDRIAL"/>
    <property type="match status" value="1"/>
</dbReference>
<dbReference type="Pfam" id="PF02866">
    <property type="entry name" value="Ldh_1_C"/>
    <property type="match status" value="1"/>
</dbReference>
<dbReference type="Pfam" id="PF00056">
    <property type="entry name" value="Ldh_1_N"/>
    <property type="match status" value="1"/>
</dbReference>
<dbReference type="SUPFAM" id="SSF56327">
    <property type="entry name" value="LDH C-terminal domain-like"/>
    <property type="match status" value="1"/>
</dbReference>
<dbReference type="SUPFAM" id="SSF51735">
    <property type="entry name" value="NAD(P)-binding Rossmann-fold domains"/>
    <property type="match status" value="1"/>
</dbReference>
<dbReference type="PROSITE" id="PS00068">
    <property type="entry name" value="MDH"/>
    <property type="match status" value="1"/>
</dbReference>
<organism>
    <name type="scientific">Pectobacterium carotovorum subsp. carotovorum</name>
    <name type="common">Erwinia carotovora subsp. carotovora</name>
    <dbReference type="NCBI Taxonomy" id="555"/>
    <lineage>
        <taxon>Bacteria</taxon>
        <taxon>Pseudomonadati</taxon>
        <taxon>Pseudomonadota</taxon>
        <taxon>Gammaproteobacteria</taxon>
        <taxon>Enterobacterales</taxon>
        <taxon>Pectobacteriaceae</taxon>
        <taxon>Pectobacterium</taxon>
    </lineage>
</organism>